<keyword id="KW-0488">Methylation</keyword>
<keyword id="KW-0687">Ribonucleoprotein</keyword>
<keyword id="KW-0689">Ribosomal protein</keyword>
<keyword id="KW-0694">RNA-binding</keyword>
<keyword id="KW-0699">rRNA-binding</keyword>
<sequence>MAPKKKVTGLIKLQIKAGAANPAPPIGPALGQHGVNIMEFCKAYNAQTEAQRGNVIPVEITVYEDRTFTFILKTPPAAELIKKAAGVAKGSGTPHTVKVAKLTMDQVREIAEQKQADLNANDIDAAAKIIAGTARSMGITVEA</sequence>
<protein>
    <recommendedName>
        <fullName evidence="1">Large ribosomal subunit protein uL11</fullName>
    </recommendedName>
    <alternativeName>
        <fullName evidence="2">50S ribosomal protein L11</fullName>
    </alternativeName>
</protein>
<proteinExistence type="inferred from homology"/>
<gene>
    <name evidence="1" type="primary">rplK</name>
    <name type="ordered locus">CMM_2787</name>
</gene>
<evidence type="ECO:0000255" key="1">
    <source>
        <dbReference type="HAMAP-Rule" id="MF_00736"/>
    </source>
</evidence>
<evidence type="ECO:0000305" key="2"/>
<dbReference type="EMBL" id="AM711867">
    <property type="protein sequence ID" value="CAN02872.1"/>
    <property type="molecule type" value="Genomic_DNA"/>
</dbReference>
<dbReference type="RefSeq" id="WP_012039476.1">
    <property type="nucleotide sequence ID" value="NC_009480.1"/>
</dbReference>
<dbReference type="SMR" id="A5CUT4"/>
<dbReference type="GeneID" id="92984487"/>
<dbReference type="KEGG" id="cmi:CMM_2787"/>
<dbReference type="eggNOG" id="COG0080">
    <property type="taxonomic scope" value="Bacteria"/>
</dbReference>
<dbReference type="HOGENOM" id="CLU_074237_2_1_11"/>
<dbReference type="OrthoDB" id="9802408at2"/>
<dbReference type="Proteomes" id="UP000001564">
    <property type="component" value="Chromosome"/>
</dbReference>
<dbReference type="GO" id="GO:0022625">
    <property type="term" value="C:cytosolic large ribosomal subunit"/>
    <property type="evidence" value="ECO:0007669"/>
    <property type="project" value="TreeGrafter"/>
</dbReference>
<dbReference type="GO" id="GO:0070180">
    <property type="term" value="F:large ribosomal subunit rRNA binding"/>
    <property type="evidence" value="ECO:0007669"/>
    <property type="project" value="UniProtKB-UniRule"/>
</dbReference>
<dbReference type="GO" id="GO:0003735">
    <property type="term" value="F:structural constituent of ribosome"/>
    <property type="evidence" value="ECO:0007669"/>
    <property type="project" value="InterPro"/>
</dbReference>
<dbReference type="GO" id="GO:0006412">
    <property type="term" value="P:translation"/>
    <property type="evidence" value="ECO:0007669"/>
    <property type="project" value="UniProtKB-UniRule"/>
</dbReference>
<dbReference type="CDD" id="cd00349">
    <property type="entry name" value="Ribosomal_L11"/>
    <property type="match status" value="1"/>
</dbReference>
<dbReference type="FunFam" id="1.10.10.250:FF:000001">
    <property type="entry name" value="50S ribosomal protein L11"/>
    <property type="match status" value="1"/>
</dbReference>
<dbReference type="FunFam" id="3.30.1550.10:FF:000001">
    <property type="entry name" value="50S ribosomal protein L11"/>
    <property type="match status" value="1"/>
</dbReference>
<dbReference type="Gene3D" id="1.10.10.250">
    <property type="entry name" value="Ribosomal protein L11, C-terminal domain"/>
    <property type="match status" value="1"/>
</dbReference>
<dbReference type="Gene3D" id="3.30.1550.10">
    <property type="entry name" value="Ribosomal protein L11/L12, N-terminal domain"/>
    <property type="match status" value="1"/>
</dbReference>
<dbReference type="HAMAP" id="MF_00736">
    <property type="entry name" value="Ribosomal_uL11"/>
    <property type="match status" value="1"/>
</dbReference>
<dbReference type="InterPro" id="IPR000911">
    <property type="entry name" value="Ribosomal_uL11"/>
</dbReference>
<dbReference type="InterPro" id="IPR006519">
    <property type="entry name" value="Ribosomal_uL11_bac-typ"/>
</dbReference>
<dbReference type="InterPro" id="IPR020783">
    <property type="entry name" value="Ribosomal_uL11_C"/>
</dbReference>
<dbReference type="InterPro" id="IPR036769">
    <property type="entry name" value="Ribosomal_uL11_C_sf"/>
</dbReference>
<dbReference type="InterPro" id="IPR020785">
    <property type="entry name" value="Ribosomal_uL11_CS"/>
</dbReference>
<dbReference type="InterPro" id="IPR020784">
    <property type="entry name" value="Ribosomal_uL11_N"/>
</dbReference>
<dbReference type="InterPro" id="IPR036796">
    <property type="entry name" value="Ribosomal_uL11_N_sf"/>
</dbReference>
<dbReference type="NCBIfam" id="TIGR01632">
    <property type="entry name" value="L11_bact"/>
    <property type="match status" value="1"/>
</dbReference>
<dbReference type="PANTHER" id="PTHR11661">
    <property type="entry name" value="60S RIBOSOMAL PROTEIN L12"/>
    <property type="match status" value="1"/>
</dbReference>
<dbReference type="PANTHER" id="PTHR11661:SF1">
    <property type="entry name" value="LARGE RIBOSOMAL SUBUNIT PROTEIN UL11M"/>
    <property type="match status" value="1"/>
</dbReference>
<dbReference type="Pfam" id="PF00298">
    <property type="entry name" value="Ribosomal_L11"/>
    <property type="match status" value="1"/>
</dbReference>
<dbReference type="Pfam" id="PF03946">
    <property type="entry name" value="Ribosomal_L11_N"/>
    <property type="match status" value="1"/>
</dbReference>
<dbReference type="SMART" id="SM00649">
    <property type="entry name" value="RL11"/>
    <property type="match status" value="1"/>
</dbReference>
<dbReference type="SUPFAM" id="SSF54747">
    <property type="entry name" value="Ribosomal L11/L12e N-terminal domain"/>
    <property type="match status" value="1"/>
</dbReference>
<dbReference type="SUPFAM" id="SSF46906">
    <property type="entry name" value="Ribosomal protein L11, C-terminal domain"/>
    <property type="match status" value="1"/>
</dbReference>
<dbReference type="PROSITE" id="PS00359">
    <property type="entry name" value="RIBOSOMAL_L11"/>
    <property type="match status" value="1"/>
</dbReference>
<feature type="chain" id="PRO_1000046166" description="Large ribosomal subunit protein uL11">
    <location>
        <begin position="1"/>
        <end position="143"/>
    </location>
</feature>
<comment type="function">
    <text evidence="1">Forms part of the ribosomal stalk which helps the ribosome interact with GTP-bound translation factors.</text>
</comment>
<comment type="subunit">
    <text evidence="1">Part of the ribosomal stalk of the 50S ribosomal subunit. Interacts with L10 and the large rRNA to form the base of the stalk. L10 forms an elongated spine to which L12 dimers bind in a sequential fashion forming a multimeric L10(L12)X complex.</text>
</comment>
<comment type="PTM">
    <text evidence="1">One or more lysine residues are methylated.</text>
</comment>
<comment type="similarity">
    <text evidence="1">Belongs to the universal ribosomal protein uL11 family.</text>
</comment>
<name>RL11_CLAM3</name>
<organism>
    <name type="scientific">Clavibacter michiganensis subsp. michiganensis (strain NCPPB 382)</name>
    <dbReference type="NCBI Taxonomy" id="443906"/>
    <lineage>
        <taxon>Bacteria</taxon>
        <taxon>Bacillati</taxon>
        <taxon>Actinomycetota</taxon>
        <taxon>Actinomycetes</taxon>
        <taxon>Micrococcales</taxon>
        <taxon>Microbacteriaceae</taxon>
        <taxon>Clavibacter</taxon>
    </lineage>
</organism>
<reference key="1">
    <citation type="journal article" date="2008" name="J. Bacteriol.">
        <title>The genome sequence of the tomato-pathogenic actinomycete Clavibacter michiganensis subsp. michiganensis NCPPB382 reveals a large island involved in pathogenicity.</title>
        <authorList>
            <person name="Gartemann K.-H."/>
            <person name="Abt B."/>
            <person name="Bekel T."/>
            <person name="Burger A."/>
            <person name="Engemann J."/>
            <person name="Fluegel M."/>
            <person name="Gaigalat L."/>
            <person name="Goesmann A."/>
            <person name="Graefen I."/>
            <person name="Kalinowski J."/>
            <person name="Kaup O."/>
            <person name="Kirchner O."/>
            <person name="Krause L."/>
            <person name="Linke B."/>
            <person name="McHardy A."/>
            <person name="Meyer F."/>
            <person name="Pohle S."/>
            <person name="Rueckert C."/>
            <person name="Schneiker S."/>
            <person name="Zellermann E.-M."/>
            <person name="Puehler A."/>
            <person name="Eichenlaub R."/>
            <person name="Kaiser O."/>
            <person name="Bartels D."/>
        </authorList>
    </citation>
    <scope>NUCLEOTIDE SEQUENCE [LARGE SCALE GENOMIC DNA]</scope>
    <source>
        <strain>NCPPB 382</strain>
    </source>
</reference>
<accession>A5CUT4</accession>